<name>RL6_DESDA</name>
<reference key="1">
    <citation type="submission" date="2009-01" db="EMBL/GenBank/DDBJ databases">
        <title>Complete sequence of Desulfovibrio desulfuricans subsp. desulfuricans str. ATCC 27774.</title>
        <authorList>
            <consortium name="US DOE Joint Genome Institute"/>
            <person name="Lucas S."/>
            <person name="Copeland A."/>
            <person name="Lapidus A."/>
            <person name="Glavina del Rio T."/>
            <person name="Tice H."/>
            <person name="Bruce D."/>
            <person name="Goodwin L."/>
            <person name="Pitluck S."/>
            <person name="Sims D."/>
            <person name="Lu M."/>
            <person name="Kiss H."/>
            <person name="Meineke L."/>
            <person name="Brettin T."/>
            <person name="Detter J.C."/>
            <person name="Han C."/>
            <person name="Larimer F."/>
            <person name="Land M."/>
            <person name="Hauser L."/>
            <person name="Kyrpides N."/>
            <person name="Ovchinnikova G."/>
            <person name="Hazen T.C."/>
        </authorList>
    </citation>
    <scope>NUCLEOTIDE SEQUENCE [LARGE SCALE GENOMIC DNA]</scope>
    <source>
        <strain>ATCC 27774 / DSM 6949 / MB</strain>
    </source>
</reference>
<comment type="function">
    <text evidence="1">This protein binds to the 23S rRNA, and is important in its secondary structure. It is located near the subunit interface in the base of the L7/L12 stalk, and near the tRNA binding site of the peptidyltransferase center.</text>
</comment>
<comment type="subunit">
    <text evidence="1">Part of the 50S ribosomal subunit.</text>
</comment>
<comment type="similarity">
    <text evidence="1">Belongs to the universal ribosomal protein uL6 family.</text>
</comment>
<organism>
    <name type="scientific">Desulfovibrio desulfuricans (strain ATCC 27774 / DSM 6949 / MB)</name>
    <dbReference type="NCBI Taxonomy" id="525146"/>
    <lineage>
        <taxon>Bacteria</taxon>
        <taxon>Pseudomonadati</taxon>
        <taxon>Thermodesulfobacteriota</taxon>
        <taxon>Desulfovibrionia</taxon>
        <taxon>Desulfovibrionales</taxon>
        <taxon>Desulfovibrionaceae</taxon>
        <taxon>Desulfovibrio</taxon>
    </lineage>
</organism>
<feature type="chain" id="PRO_1000166805" description="Large ribosomal subunit protein uL6">
    <location>
        <begin position="1"/>
        <end position="179"/>
    </location>
</feature>
<accession>B8IYK6</accession>
<evidence type="ECO:0000255" key="1">
    <source>
        <dbReference type="HAMAP-Rule" id="MF_01365"/>
    </source>
</evidence>
<evidence type="ECO:0000305" key="2"/>
<sequence length="179" mass="19364">MSRIGKLPIPVPNGVEVKIGTDVVEVKGPKGSLSTPVCSLLQYEQADGHVVLTRIEDDRVTRAQHGLRRSLLSNCIDGVTKGFSKALEVIGVGYRVAVKGNIIELQVGYSHPVLVELPEGLKATVEGQVLTISGIDKELVGEMAARIRRIRKPEPYKGKGIKYATETIRRKVGKSGGKK</sequence>
<keyword id="KW-0687">Ribonucleoprotein</keyword>
<keyword id="KW-0689">Ribosomal protein</keyword>
<keyword id="KW-0694">RNA-binding</keyword>
<keyword id="KW-0699">rRNA-binding</keyword>
<dbReference type="EMBL" id="CP001358">
    <property type="protein sequence ID" value="ACL48583.1"/>
    <property type="molecule type" value="Genomic_DNA"/>
</dbReference>
<dbReference type="SMR" id="B8IYK6"/>
<dbReference type="STRING" id="525146.Ddes_0675"/>
<dbReference type="KEGG" id="dds:Ddes_0675"/>
<dbReference type="eggNOG" id="COG0097">
    <property type="taxonomic scope" value="Bacteria"/>
</dbReference>
<dbReference type="HOGENOM" id="CLU_065464_1_2_7"/>
<dbReference type="GO" id="GO:0022625">
    <property type="term" value="C:cytosolic large ribosomal subunit"/>
    <property type="evidence" value="ECO:0007669"/>
    <property type="project" value="TreeGrafter"/>
</dbReference>
<dbReference type="GO" id="GO:0019843">
    <property type="term" value="F:rRNA binding"/>
    <property type="evidence" value="ECO:0007669"/>
    <property type="project" value="UniProtKB-UniRule"/>
</dbReference>
<dbReference type="GO" id="GO:0003735">
    <property type="term" value="F:structural constituent of ribosome"/>
    <property type="evidence" value="ECO:0007669"/>
    <property type="project" value="InterPro"/>
</dbReference>
<dbReference type="GO" id="GO:0002181">
    <property type="term" value="P:cytoplasmic translation"/>
    <property type="evidence" value="ECO:0007669"/>
    <property type="project" value="TreeGrafter"/>
</dbReference>
<dbReference type="FunFam" id="3.90.930.12:FF:000001">
    <property type="entry name" value="50S ribosomal protein L6"/>
    <property type="match status" value="1"/>
</dbReference>
<dbReference type="FunFam" id="3.90.930.12:FF:000002">
    <property type="entry name" value="50S ribosomal protein L6"/>
    <property type="match status" value="1"/>
</dbReference>
<dbReference type="Gene3D" id="3.90.930.12">
    <property type="entry name" value="Ribosomal protein L6, alpha-beta domain"/>
    <property type="match status" value="2"/>
</dbReference>
<dbReference type="HAMAP" id="MF_01365_B">
    <property type="entry name" value="Ribosomal_uL6_B"/>
    <property type="match status" value="1"/>
</dbReference>
<dbReference type="InterPro" id="IPR000702">
    <property type="entry name" value="Ribosomal_uL6-like"/>
</dbReference>
<dbReference type="InterPro" id="IPR036789">
    <property type="entry name" value="Ribosomal_uL6-like_a/b-dom_sf"/>
</dbReference>
<dbReference type="InterPro" id="IPR020040">
    <property type="entry name" value="Ribosomal_uL6_a/b-dom"/>
</dbReference>
<dbReference type="InterPro" id="IPR019906">
    <property type="entry name" value="Ribosomal_uL6_bac-type"/>
</dbReference>
<dbReference type="InterPro" id="IPR002358">
    <property type="entry name" value="Ribosomal_uL6_CS"/>
</dbReference>
<dbReference type="NCBIfam" id="TIGR03654">
    <property type="entry name" value="L6_bact"/>
    <property type="match status" value="1"/>
</dbReference>
<dbReference type="PANTHER" id="PTHR11655">
    <property type="entry name" value="60S/50S RIBOSOMAL PROTEIN L6/L9"/>
    <property type="match status" value="1"/>
</dbReference>
<dbReference type="PANTHER" id="PTHR11655:SF14">
    <property type="entry name" value="LARGE RIBOSOMAL SUBUNIT PROTEIN UL6M"/>
    <property type="match status" value="1"/>
</dbReference>
<dbReference type="Pfam" id="PF00347">
    <property type="entry name" value="Ribosomal_L6"/>
    <property type="match status" value="2"/>
</dbReference>
<dbReference type="PIRSF" id="PIRSF002162">
    <property type="entry name" value="Ribosomal_L6"/>
    <property type="match status" value="1"/>
</dbReference>
<dbReference type="PRINTS" id="PR00059">
    <property type="entry name" value="RIBOSOMALL6"/>
</dbReference>
<dbReference type="SUPFAM" id="SSF56053">
    <property type="entry name" value="Ribosomal protein L6"/>
    <property type="match status" value="2"/>
</dbReference>
<dbReference type="PROSITE" id="PS00525">
    <property type="entry name" value="RIBOSOMAL_L6_1"/>
    <property type="match status" value="1"/>
</dbReference>
<protein>
    <recommendedName>
        <fullName evidence="1">Large ribosomal subunit protein uL6</fullName>
    </recommendedName>
    <alternativeName>
        <fullName evidence="2">50S ribosomal protein L6</fullName>
    </alternativeName>
</protein>
<proteinExistence type="inferred from homology"/>
<gene>
    <name evidence="1" type="primary">rplF</name>
    <name type="ordered locus">Ddes_0675</name>
</gene>